<keyword id="KW-0106">Calcium</keyword>
<keyword id="KW-0130">Cell adhesion</keyword>
<keyword id="KW-1015">Disulfide bond</keyword>
<keyword id="KW-0325">Glycoprotein</keyword>
<keyword id="KW-0401">Integrin</keyword>
<keyword id="KW-0472">Membrane</keyword>
<keyword id="KW-0479">Metal-binding</keyword>
<keyword id="KW-0597">Phosphoprotein</keyword>
<keyword id="KW-0675">Receptor</keyword>
<keyword id="KW-1185">Reference proteome</keyword>
<keyword id="KW-0677">Repeat</keyword>
<keyword id="KW-0732">Signal</keyword>
<keyword id="KW-0812">Transmembrane</keyword>
<keyword id="KW-1133">Transmembrane helix</keyword>
<proteinExistence type="evidence at protein level"/>
<organism>
    <name type="scientific">Mus musculus</name>
    <name type="common">Mouse</name>
    <dbReference type="NCBI Taxonomy" id="10090"/>
    <lineage>
        <taxon>Eukaryota</taxon>
        <taxon>Metazoa</taxon>
        <taxon>Chordata</taxon>
        <taxon>Craniata</taxon>
        <taxon>Vertebrata</taxon>
        <taxon>Euteleostomi</taxon>
        <taxon>Mammalia</taxon>
        <taxon>Eutheria</taxon>
        <taxon>Euarchontoglires</taxon>
        <taxon>Glires</taxon>
        <taxon>Rodentia</taxon>
        <taxon>Myomorpha</taxon>
        <taxon>Muroidea</taxon>
        <taxon>Muridae</taxon>
        <taxon>Murinae</taxon>
        <taxon>Mus</taxon>
        <taxon>Mus</taxon>
    </lineage>
</organism>
<sequence length="1039" mass="115696">MFSTKSAWLRNGGADQGPRGIALREAVMLLLYFGVPTGPSYNLDPENALLYQGPSGTLFGYSVVLHSHGSKRWLIVGAPTASWLSNASVVNPGAIYRCGIRKNPNQTCEQLQSGSPSGEPCGKTCLEERDNQWLGVTLSRQPGENGSIVTCGHRWKNIFYMKSDNKLPTGICYVMPSDLRTELSKRMAPCYKDYTRKFGENFASCQAGISSFYTQDLIVMGAPGSSYWTGTVFVYNITTNQYKAFVDRQNQVKFGSYLGYSVGAGHFRSPHTTEVVGGAPQHEQIGKAYIFSIDENELNIVYEMKGKKLGSYFGASVCAVDLNADGFSDLLVGAPMQSTIREEGRVFVYINSGMGAVMVEMERVLVGSDKYAARFGESIANLGDIDNDGFEDIAIGAPQEDDLRGAVYIYNGRVDGISSTYSQRIEGQQISKSLRMFGQSISGQIDADNNGYVDVAVGAFQSDSAVLLRTRPVVIVEASLSHPESVNRTKFDCTENGLPSVCMHLTLCFSYKGKEVPGYIVLFYNVSLDVHRKAESPSRFYFFSNGTSDVITGSIRVSSSGEKCRTHQAFMRKDVRDILTPIHVEATYHLGHHVITKRNTEEFPPLQPILQQKKEKDVIRKMINFARFCAYENCSADLQVSAKVGFLKPYENKTYLAVGSMKTIMLNVSLFNAGDDAYETTLNVQLPTGLYFIKILDLEEKQINCEVTESSGIVKLACSLGYIYVDRLSRIDISFLLDVSSLSRAHEDLSISVHASCENEGELDQVRDNRVTLTIPLRYEVMLTVHGLVNPTSFVYGSSEENEPETCMAEKLNLTFHVINTGISMAPNVSVKIMVPNSFLPQDDKLFNVLDVQTTTGQCHFKHYGRECTFAQQKGIAGTLTDIVKFLSKTDKRLLYCMKADQHCLDFLCNFGKMESGKEASVHIQLEGRPSILEMDETSSLKFEIKATAFPEPHPKVIELNKDENVAHVFLEGLHHQRPKRHFTIIIITISLLLGLIVLLLISCVMWKAGFFKRQYKSILQEENRRDSWSYVNSKSNDD</sequence>
<feature type="signal peptide" evidence="4">
    <location>
        <begin position="1"/>
        <end position="40"/>
    </location>
</feature>
<feature type="chain" id="PRO_0000016245" description="Integrin alpha-4">
    <location>
        <begin position="41"/>
        <end position="1039"/>
    </location>
</feature>
<feature type="topological domain" description="Extracellular" evidence="4">
    <location>
        <begin position="41"/>
        <end position="983"/>
    </location>
</feature>
<feature type="transmembrane region" description="Helical" evidence="4">
    <location>
        <begin position="984"/>
        <end position="1007"/>
    </location>
</feature>
<feature type="topological domain" description="Cytoplasmic" evidence="4">
    <location>
        <begin position="1008"/>
        <end position="1039"/>
    </location>
</feature>
<feature type="repeat" description="FG-GAP 1" evidence="5">
    <location>
        <begin position="42"/>
        <end position="107"/>
    </location>
</feature>
<feature type="repeat" description="FG-GAP 2" evidence="5">
    <location>
        <begin position="117"/>
        <end position="184"/>
    </location>
</feature>
<feature type="repeat" description="FG-GAP 3" evidence="5">
    <location>
        <begin position="193"/>
        <end position="244"/>
    </location>
</feature>
<feature type="repeat" description="FG-GAP 4" evidence="5">
    <location>
        <begin position="246"/>
        <end position="298"/>
    </location>
</feature>
<feature type="repeat" description="FG-GAP 5" evidence="5">
    <location>
        <begin position="299"/>
        <end position="358"/>
    </location>
</feature>
<feature type="repeat" description="FG-GAP 6" evidence="5">
    <location>
        <begin position="362"/>
        <end position="419"/>
    </location>
</feature>
<feature type="repeat" description="FG-GAP 7" evidence="5">
    <location>
        <begin position="423"/>
        <end position="485"/>
    </location>
</feature>
<feature type="short sequence motif" description="SG1">
    <location>
        <begin position="613"/>
        <end position="623"/>
    </location>
</feature>
<feature type="short sequence motif" description="GFFKR motif">
    <location>
        <begin position="1010"/>
        <end position="1014"/>
    </location>
</feature>
<feature type="binding site" evidence="2">
    <location>
        <position position="321"/>
    </location>
    <ligand>
        <name>Ca(2+)</name>
        <dbReference type="ChEBI" id="CHEBI:29108"/>
        <label>2</label>
    </ligand>
</feature>
<feature type="binding site" evidence="2">
    <location>
        <position position="323"/>
    </location>
    <ligand>
        <name>Ca(2+)</name>
        <dbReference type="ChEBI" id="CHEBI:29108"/>
        <label>2</label>
    </ligand>
</feature>
<feature type="binding site" evidence="2">
    <location>
        <position position="325"/>
    </location>
    <ligand>
        <name>Ca(2+)</name>
        <dbReference type="ChEBI" id="CHEBI:29108"/>
        <label>2</label>
    </ligand>
</feature>
<feature type="binding site" evidence="2">
    <location>
        <position position="329"/>
    </location>
    <ligand>
        <name>Ca(2+)</name>
        <dbReference type="ChEBI" id="CHEBI:29108"/>
        <label>2</label>
    </ligand>
</feature>
<feature type="binding site" evidence="2">
    <location>
        <position position="384"/>
    </location>
    <ligand>
        <name>Ca(2+)</name>
        <dbReference type="ChEBI" id="CHEBI:29108"/>
        <label>3</label>
    </ligand>
</feature>
<feature type="binding site" evidence="2">
    <location>
        <position position="386"/>
    </location>
    <ligand>
        <name>Ca(2+)</name>
        <dbReference type="ChEBI" id="CHEBI:29108"/>
        <label>3</label>
    </ligand>
</feature>
<feature type="binding site" evidence="2">
    <location>
        <position position="388"/>
    </location>
    <ligand>
        <name>Ca(2+)</name>
        <dbReference type="ChEBI" id="CHEBI:29108"/>
        <label>3</label>
    </ligand>
</feature>
<feature type="binding site" evidence="2">
    <location>
        <position position="392"/>
    </location>
    <ligand>
        <name>Ca(2+)</name>
        <dbReference type="ChEBI" id="CHEBI:29108"/>
        <label>3</label>
    </ligand>
</feature>
<feature type="binding site" evidence="2">
    <location>
        <position position="446"/>
    </location>
    <ligand>
        <name>Ca(2+)</name>
        <dbReference type="ChEBI" id="CHEBI:29108"/>
        <label>4</label>
    </ligand>
</feature>
<feature type="binding site" evidence="2">
    <location>
        <position position="448"/>
    </location>
    <ligand>
        <name>Ca(2+)</name>
        <dbReference type="ChEBI" id="CHEBI:29108"/>
        <label>4</label>
    </ligand>
</feature>
<feature type="binding site" evidence="2">
    <location>
        <position position="450"/>
    </location>
    <ligand>
        <name>Ca(2+)</name>
        <dbReference type="ChEBI" id="CHEBI:29108"/>
        <label>4</label>
    </ligand>
</feature>
<feature type="binding site" evidence="2">
    <location>
        <position position="452"/>
    </location>
    <ligand>
        <name>Ca(2+)</name>
        <dbReference type="ChEBI" id="CHEBI:29108"/>
        <label>4</label>
    </ligand>
</feature>
<feature type="binding site" evidence="2">
    <location>
        <position position="454"/>
    </location>
    <ligand>
        <name>Ca(2+)</name>
        <dbReference type="ChEBI" id="CHEBI:29108"/>
        <label>4</label>
    </ligand>
</feature>
<feature type="site" description="Cleavage">
    <location>
        <begin position="598"/>
        <end position="599"/>
    </location>
</feature>
<feature type="modified residue" description="Phosphoserine" evidence="9 10">
    <location>
        <position position="1028"/>
    </location>
</feature>
<feature type="glycosylation site" description="N-linked (GlcNAc...) asparagine" evidence="4">
    <location>
        <position position="86"/>
    </location>
</feature>
<feature type="glycosylation site" description="N-linked (GlcNAc...) asparagine" evidence="4">
    <location>
        <position position="105"/>
    </location>
</feature>
<feature type="glycosylation site" description="N-linked (GlcNAc...) asparagine" evidence="4">
    <location>
        <position position="145"/>
    </location>
</feature>
<feature type="glycosylation site" description="N-linked (GlcNAc...) asparagine" evidence="4">
    <location>
        <position position="236"/>
    </location>
</feature>
<feature type="glycosylation site" description="N-linked (GlcNAc...) asparagine" evidence="4">
    <location>
        <position position="487"/>
    </location>
</feature>
<feature type="glycosylation site" description="N-linked (GlcNAc...) asparagine" evidence="4">
    <location>
        <position position="525"/>
    </location>
</feature>
<feature type="glycosylation site" description="N-linked (GlcNAc...) asparagine" evidence="4">
    <location>
        <position position="545"/>
    </location>
</feature>
<feature type="glycosylation site" description="N-linked (GlcNAc...) asparagine" evidence="4">
    <location>
        <position position="633"/>
    </location>
</feature>
<feature type="glycosylation site" description="N-linked (GlcNAc...) asparagine" evidence="4">
    <location>
        <position position="652"/>
    </location>
</feature>
<feature type="glycosylation site" description="N-linked (GlcNAc...) asparagine" evidence="4">
    <location>
        <position position="667"/>
    </location>
</feature>
<feature type="glycosylation site" description="N-linked (GlcNAc...) asparagine" evidence="4">
    <location>
        <position position="813"/>
    </location>
</feature>
<feature type="glycosylation site" description="N-linked (GlcNAc...) asparagine" evidence="4">
    <location>
        <position position="828"/>
    </location>
</feature>
<feature type="disulfide bond" evidence="1">
    <location>
        <begin position="98"/>
        <end position="108"/>
    </location>
</feature>
<feature type="disulfide bond" evidence="1">
    <location>
        <begin position="151"/>
        <end position="172"/>
    </location>
</feature>
<feature type="disulfide bond" evidence="1">
    <location>
        <begin position="190"/>
        <end position="205"/>
    </location>
</feature>
<feature type="disulfide bond" evidence="1">
    <location>
        <begin position="493"/>
        <end position="502"/>
    </location>
</feature>
<feature type="disulfide bond" evidence="1">
    <location>
        <begin position="508"/>
        <end position="564"/>
    </location>
</feature>
<feature type="disulfide bond" evidence="1">
    <location>
        <begin position="629"/>
        <end position="634"/>
    </location>
</feature>
<feature type="disulfide bond" evidence="1">
    <location>
        <begin position="705"/>
        <end position="718"/>
    </location>
</feature>
<feature type="disulfide bond" evidence="1">
    <location>
        <begin position="859"/>
        <end position="897"/>
    </location>
</feature>
<feature type="disulfide bond" evidence="1">
    <location>
        <begin position="904"/>
        <end position="909"/>
    </location>
</feature>
<accession>Q00651</accession>
<gene>
    <name type="primary">Itga4</name>
</gene>
<reference key="1">
    <citation type="journal article" date="1991" name="J. Cell Biol.">
        <title>Cloning and expression of cDNAs for the alpha subunit of the murine lymphocyte-Peyer's patch adhesion molecule.</title>
        <authorList>
            <person name="Neuhaus H."/>
            <person name="Hu M.C.-T."/>
            <person name="Hemler M.E."/>
            <person name="Takada Y."/>
            <person name="Holzmann B."/>
            <person name="Weissman I.L."/>
        </authorList>
    </citation>
    <scope>NUCLEOTIDE SEQUENCE [MRNA]</scope>
    <scope>TISSUE SPECIFICITY</scope>
</reference>
<reference key="2">
    <citation type="journal article" date="2009" name="Immunity">
        <title>The phagosomal proteome in interferon-gamma-activated macrophages.</title>
        <authorList>
            <person name="Trost M."/>
            <person name="English L."/>
            <person name="Lemieux S."/>
            <person name="Courcelles M."/>
            <person name="Desjardins M."/>
            <person name="Thibault P."/>
        </authorList>
    </citation>
    <scope>PHOSPHORYLATION [LARGE SCALE ANALYSIS] AT SER-1028</scope>
    <scope>IDENTIFICATION BY MASS SPECTROMETRY [LARGE SCALE ANALYSIS]</scope>
</reference>
<reference key="3">
    <citation type="journal article" date="2010" name="Cell">
        <title>A tissue-specific atlas of mouse protein phosphorylation and expression.</title>
        <authorList>
            <person name="Huttlin E.L."/>
            <person name="Jedrychowski M.P."/>
            <person name="Elias J.E."/>
            <person name="Goswami T."/>
            <person name="Rad R."/>
            <person name="Beausoleil S.A."/>
            <person name="Villen J."/>
            <person name="Haas W."/>
            <person name="Sowa M.E."/>
            <person name="Gygi S.P."/>
        </authorList>
    </citation>
    <scope>PHOSPHORYLATION [LARGE SCALE ANALYSIS] AT SER-1028</scope>
    <scope>IDENTIFICATION BY MASS SPECTROMETRY [LARGE SCALE ANALYSIS]</scope>
    <source>
        <tissue>Brain</tissue>
        <tissue>Lung</tissue>
        <tissue>Spleen</tissue>
    </source>
</reference>
<reference key="4">
    <citation type="journal article" date="2022" name="Br. J. Pharmacol.">
        <title>The integrin ligand SVEP1 regulates GPCR-mediated vasoconstriction via integrins alpha9beta1 and alpha4beta1.</title>
        <authorList>
            <person name="Morris G.E."/>
            <person name="Denniff M.J."/>
            <person name="Karamanavi E."/>
            <person name="Andrews S.A."/>
            <person name="Kostogrys R.B."/>
            <person name="Bountziouka V."/>
            <person name="Ghaderi-Najafabadi M."/>
            <person name="Shamkhi N."/>
            <person name="McConnell G."/>
            <person name="Kaiser M.A."/>
            <person name="Carleton L."/>
            <person name="Schofield C."/>
            <person name="Kessler T."/>
            <person name="Rainbow R.D."/>
            <person name="Samani N.J."/>
            <person name="Webb T.R."/>
        </authorList>
    </citation>
    <scope>FUNCTION</scope>
    <scope>TISSUE SPECIFICITY</scope>
</reference>
<name>ITA4_MOUSE</name>
<comment type="function">
    <text evidence="3 7">Integrins alpha-4/beta-1 (VLA-4 or LPAM-2) and alpha-4/beta-7 (LPAM-1) are receptors for fibronectin. They recognize one or more domains within the alternatively spliced CS-1 and CS-5 regions of fibronectin. They are also receptors for VCAM1. Integrin alpha-4/beta-1 recognizes the sequence Q-I-D-S in VCAM1. Integrin alpha-4/beta-7 is also a receptor for MADCAM1. It recognizes the sequence L-D-T in MADCAM1. On activated endothelial cells integrin VLA-4 triggers homotypic aggregation for most VLA-4-positive leukocyte cell lines. It may also participate in cytolytic T-cell interactions with target cells. ITGA4:ITGB1 binds to fractalkine (CX3CL1) and may act as its coreceptor in CX3CR1-dependent fractalkine signaling. ITGA4:ITGB1 binds to PLA2G2A via a site (site 2) which is distinct from the classical ligand-binding site (site 1) and this induces integrin conformational changes and enhanced ligand binding to site 1. Integrin ITGA4:ITGB1 represses PRKCA-mediated L-type voltage-gated channel Ca(2+) influx and ROCK-mediated calcium sensitivity in vascular smooth muscle cells via its interaction with SVEP1, thereby inhibiting vasocontraction (PubMed:35802072).</text>
</comment>
<comment type="subunit">
    <text evidence="3">Heterodimer of an alpha and a beta subunit. The alpha subunit can sometimes be cleaved into two non-covalently associated fragments. Alpha-4 associates with either beta-1 or beta-7. Alpha-4 interacts with PXN, LPXN, and TGFB1I1/HIC5. Interacts with CSPG4 through CSPG4 chondroitin sulfate glycosaminoglycan. Interacts with JAML; integrin alpha-4/beta-1 may regulate leukocyte to endothelial cells adhesion by controlling JAML homodimerization. ITGA4:ITGB1 is found in a ternary complex with CX3CR1 and CX3CL1 (By similarity). Interacts with MDK. ITGA4:ITGB1 interacts with MDK; this interaction mediates MDK-induced osteoblast cells migration through PXN phosphorylation (By similarity). Integrin ITGA4:ITGB1 interacts with SVEP1 (via Sushi domain 21); thereby inhibits Ca(2+) intracellular signaling and as a result represses vasocontraction (By similarity). ITGA4:ITGB1 interacts with SELP (By similarity). ITGA4:ITGB1 interacts with BCAM (By similarity).</text>
</comment>
<comment type="subcellular location">
    <subcellularLocation>
        <location evidence="4">Membrane</location>
        <topology evidence="4">Single-pass type I membrane protein</topology>
    </subcellularLocation>
</comment>
<comment type="tissue specificity">
    <text evidence="6 7">Expressed in the media layer of the arterial wall (at protein level) (PubMed:35802072). Weakly expression in the thymus, spleen and mesenteric lymph nodes (PubMed:1840602).</text>
</comment>
<comment type="domain">
    <text evidence="1">The SG1 motif is involved in binding to chondroitin sulfate glycosaminoglycan and cell adhesion.</text>
</comment>
<comment type="PTM">
    <text evidence="1">Phosphorylation on Ser-1028 inhibits PXN binding.</text>
</comment>
<comment type="similarity">
    <text evidence="8">Belongs to the integrin alpha chain family.</text>
</comment>
<protein>
    <recommendedName>
        <fullName>Integrin alpha-4</fullName>
    </recommendedName>
    <alternativeName>
        <fullName>CD49 antigen-like family member D</fullName>
    </alternativeName>
    <alternativeName>
        <fullName>Integrin alpha-IV</fullName>
    </alternativeName>
    <alternativeName>
        <fullName>Lymphocyte Peyer patch adhesion molecules subunit alpha</fullName>
        <shortName>LPAM subunit alpha</shortName>
    </alternativeName>
    <alternativeName>
        <fullName>VLA-4 subunit alpha</fullName>
    </alternativeName>
    <cdAntigenName>CD49d</cdAntigenName>
</protein>
<dbReference type="EMBL" id="X53176">
    <property type="protein sequence ID" value="CAA37316.1"/>
    <property type="molecule type" value="mRNA"/>
</dbReference>
<dbReference type="PIR" id="A41131">
    <property type="entry name" value="A41131"/>
</dbReference>
<dbReference type="RefSeq" id="NP_034706.3">
    <property type="nucleotide sequence ID" value="NM_010576.3"/>
</dbReference>
<dbReference type="SMR" id="Q00651"/>
<dbReference type="BioGRID" id="200817">
    <property type="interactions" value="1"/>
</dbReference>
<dbReference type="ComplexPortal" id="CPX-3077">
    <property type="entry name" value="Integrin alpha4-beta7 complex"/>
</dbReference>
<dbReference type="ComplexPortal" id="CPX-3118">
    <property type="entry name" value="integrin alpha4-beta1 complex"/>
</dbReference>
<dbReference type="CORUM" id="Q00651"/>
<dbReference type="FunCoup" id="Q00651">
    <property type="interactions" value="777"/>
</dbReference>
<dbReference type="STRING" id="10090.ENSMUSP00000099718"/>
<dbReference type="BindingDB" id="Q00651"/>
<dbReference type="ChEMBL" id="CHEMBL2111481"/>
<dbReference type="GlyConnect" id="2397">
    <property type="glycosylation" value="1 N-Linked glycan (1 site)"/>
</dbReference>
<dbReference type="GlyCosmos" id="Q00651">
    <property type="glycosylation" value="12 sites, 1 glycan"/>
</dbReference>
<dbReference type="GlyGen" id="Q00651">
    <property type="glycosylation" value="12 sites, 6 N-linked glycans (6 sites)"/>
</dbReference>
<dbReference type="iPTMnet" id="Q00651"/>
<dbReference type="PhosphoSitePlus" id="Q00651"/>
<dbReference type="SwissPalm" id="Q00651"/>
<dbReference type="jPOST" id="Q00651"/>
<dbReference type="PaxDb" id="10090-ENSMUSP00000099718"/>
<dbReference type="PeptideAtlas" id="Q00651"/>
<dbReference type="ProteomicsDB" id="269004"/>
<dbReference type="DNASU" id="16401"/>
<dbReference type="GeneID" id="16401"/>
<dbReference type="KEGG" id="mmu:16401"/>
<dbReference type="AGR" id="MGI:96603"/>
<dbReference type="CTD" id="3676"/>
<dbReference type="MGI" id="MGI:96603">
    <property type="gene designation" value="Itga4"/>
</dbReference>
<dbReference type="eggNOG" id="KOG3637">
    <property type="taxonomic scope" value="Eukaryota"/>
</dbReference>
<dbReference type="InParanoid" id="Q00651"/>
<dbReference type="OrthoDB" id="5317514at2759"/>
<dbReference type="PhylomeDB" id="Q00651"/>
<dbReference type="Reactome" id="R-MMU-198933">
    <property type="pathway name" value="Immunoregulatory interactions between a Lymphoid and a non-Lymphoid cell"/>
</dbReference>
<dbReference type="Reactome" id="R-MMU-202733">
    <property type="pathway name" value="Cell surface interactions at the vascular wall"/>
</dbReference>
<dbReference type="Reactome" id="R-MMU-216083">
    <property type="pathway name" value="Integrin cell surface interactions"/>
</dbReference>
<dbReference type="BioGRID-ORCS" id="16401">
    <property type="hits" value="0 hits in 63 CRISPR screens"/>
</dbReference>
<dbReference type="ChiTaRS" id="Itga4">
    <property type="organism name" value="mouse"/>
</dbReference>
<dbReference type="PRO" id="PR:Q00651"/>
<dbReference type="Proteomes" id="UP000000589">
    <property type="component" value="Unplaced"/>
</dbReference>
<dbReference type="RNAct" id="Q00651">
    <property type="molecule type" value="protein"/>
</dbReference>
<dbReference type="GO" id="GO:0009986">
    <property type="term" value="C:cell surface"/>
    <property type="evidence" value="ECO:0000304"/>
    <property type="project" value="DFLAT"/>
</dbReference>
<dbReference type="GO" id="GO:0005911">
    <property type="term" value="C:cell-cell junction"/>
    <property type="evidence" value="ECO:0000314"/>
    <property type="project" value="MGI"/>
</dbReference>
<dbReference type="GO" id="GO:0009897">
    <property type="term" value="C:external side of plasma membrane"/>
    <property type="evidence" value="ECO:0000314"/>
    <property type="project" value="MGI"/>
</dbReference>
<dbReference type="GO" id="GO:0034668">
    <property type="term" value="C:integrin alpha4-beta1 complex"/>
    <property type="evidence" value="ECO:0000266"/>
    <property type="project" value="ComplexPortal"/>
</dbReference>
<dbReference type="GO" id="GO:0001968">
    <property type="term" value="F:fibronectin binding"/>
    <property type="evidence" value="ECO:0000315"/>
    <property type="project" value="MGI"/>
</dbReference>
<dbReference type="GO" id="GO:0046872">
    <property type="term" value="F:metal ion binding"/>
    <property type="evidence" value="ECO:0007669"/>
    <property type="project" value="UniProtKB-KW"/>
</dbReference>
<dbReference type="GO" id="GO:0001974">
    <property type="term" value="P:blood vessel remodeling"/>
    <property type="evidence" value="ECO:0000315"/>
    <property type="project" value="MGI"/>
</dbReference>
<dbReference type="GO" id="GO:0007155">
    <property type="term" value="P:cell adhesion"/>
    <property type="evidence" value="ECO:0000315"/>
    <property type="project" value="MGI"/>
</dbReference>
<dbReference type="GO" id="GO:0016477">
    <property type="term" value="P:cell migration"/>
    <property type="evidence" value="ECO:0000315"/>
    <property type="project" value="MGI"/>
</dbReference>
<dbReference type="GO" id="GO:0098609">
    <property type="term" value="P:cell-cell adhesion"/>
    <property type="evidence" value="ECO:0000304"/>
    <property type="project" value="DFLAT"/>
</dbReference>
<dbReference type="GO" id="GO:0007160">
    <property type="term" value="P:cell-matrix adhesion"/>
    <property type="evidence" value="ECO:0000304"/>
    <property type="project" value="DFLAT"/>
</dbReference>
<dbReference type="GO" id="GO:0060710">
    <property type="term" value="P:chorio-allantoic fusion"/>
    <property type="evidence" value="ECO:0000315"/>
    <property type="project" value="MGI"/>
</dbReference>
<dbReference type="GO" id="GO:0060324">
    <property type="term" value="P:face development"/>
    <property type="evidence" value="ECO:0000315"/>
    <property type="project" value="MGI"/>
</dbReference>
<dbReference type="GO" id="GO:0007507">
    <property type="term" value="P:heart development"/>
    <property type="evidence" value="ECO:0000315"/>
    <property type="project" value="MGI"/>
</dbReference>
<dbReference type="GO" id="GO:0007157">
    <property type="term" value="P:heterophilic cell-cell adhesion via plasma membrane cell adhesion molecules"/>
    <property type="evidence" value="ECO:0000315"/>
    <property type="project" value="MGI"/>
</dbReference>
<dbReference type="GO" id="GO:0007229">
    <property type="term" value="P:integrin-mediated signaling pathway"/>
    <property type="evidence" value="ECO:0000303"/>
    <property type="project" value="ComplexPortal"/>
</dbReference>
<dbReference type="GO" id="GO:0007159">
    <property type="term" value="P:leukocyte cell-cell adhesion"/>
    <property type="evidence" value="ECO:0000315"/>
    <property type="project" value="MGI"/>
</dbReference>
<dbReference type="GO" id="GO:0060485">
    <property type="term" value="P:mesenchyme development"/>
    <property type="evidence" value="ECO:0000304"/>
    <property type="project" value="DFLAT"/>
</dbReference>
<dbReference type="GO" id="GO:0090074">
    <property type="term" value="P:negative regulation of protein homodimerization activity"/>
    <property type="evidence" value="ECO:0000250"/>
    <property type="project" value="UniProtKB"/>
</dbReference>
<dbReference type="GO" id="GO:0045906">
    <property type="term" value="P:negative regulation of vasoconstriction"/>
    <property type="evidence" value="ECO:0000250"/>
    <property type="project" value="UniProtKB"/>
</dbReference>
<dbReference type="GO" id="GO:1905351">
    <property type="term" value="P:pericyte cell migration"/>
    <property type="evidence" value="ECO:0000315"/>
    <property type="project" value="MGI"/>
</dbReference>
<dbReference type="GO" id="GO:0072678">
    <property type="term" value="P:T cell migration"/>
    <property type="evidence" value="ECO:0000315"/>
    <property type="project" value="MGI"/>
</dbReference>
<dbReference type="GO" id="GO:1904738">
    <property type="term" value="P:vascular associated smooth muscle cell migration"/>
    <property type="evidence" value="ECO:0000315"/>
    <property type="project" value="MGI"/>
</dbReference>
<dbReference type="GO" id="GO:0061032">
    <property type="term" value="P:visceral serous pericardium development"/>
    <property type="evidence" value="ECO:0000304"/>
    <property type="project" value="DFLAT"/>
</dbReference>
<dbReference type="FunFam" id="2.60.40.1460:FF:000009">
    <property type="entry name" value="Integrin alpha 4"/>
    <property type="match status" value="1"/>
</dbReference>
<dbReference type="FunFam" id="2.60.40.1530:FF:000013">
    <property type="entry name" value="Integrin alpha 4"/>
    <property type="match status" value="1"/>
</dbReference>
<dbReference type="FunFam" id="2.60.40.1510:FF:000019">
    <property type="entry name" value="Integrin subunit alpha 4"/>
    <property type="match status" value="1"/>
</dbReference>
<dbReference type="FunFam" id="2.130.10.130:FF:000006">
    <property type="entry name" value="Integrin, alpha 9"/>
    <property type="match status" value="1"/>
</dbReference>
<dbReference type="Gene3D" id="1.20.5.930">
    <property type="entry name" value="Bicelle-embedded integrin alpha(iib) transmembrane segment"/>
    <property type="match status" value="1"/>
</dbReference>
<dbReference type="Gene3D" id="2.130.10.130">
    <property type="entry name" value="Integrin alpha, N-terminal"/>
    <property type="match status" value="1"/>
</dbReference>
<dbReference type="Gene3D" id="2.60.40.1460">
    <property type="entry name" value="Integrin domains. Chain A, domain 2"/>
    <property type="match status" value="1"/>
</dbReference>
<dbReference type="Gene3D" id="2.60.40.1510">
    <property type="entry name" value="ntegrin, alpha v. Chain A, domain 3"/>
    <property type="match status" value="1"/>
</dbReference>
<dbReference type="Gene3D" id="2.60.40.1530">
    <property type="entry name" value="ntegrin, alpha v. Chain A, domain 4"/>
    <property type="match status" value="1"/>
</dbReference>
<dbReference type="InterPro" id="IPR013517">
    <property type="entry name" value="FG-GAP"/>
</dbReference>
<dbReference type="InterPro" id="IPR013519">
    <property type="entry name" value="Int_alpha_beta-p"/>
</dbReference>
<dbReference type="InterPro" id="IPR000413">
    <property type="entry name" value="Integrin_alpha"/>
</dbReference>
<dbReference type="InterPro" id="IPR018184">
    <property type="entry name" value="Integrin_alpha_C_CS"/>
</dbReference>
<dbReference type="InterPro" id="IPR013649">
    <property type="entry name" value="Integrin_alpha_Ig-like_1"/>
</dbReference>
<dbReference type="InterPro" id="IPR048285">
    <property type="entry name" value="Integrin_alpha_Ig-like_2"/>
</dbReference>
<dbReference type="InterPro" id="IPR048286">
    <property type="entry name" value="Integrin_alpha_Ig-like_3"/>
</dbReference>
<dbReference type="InterPro" id="IPR028994">
    <property type="entry name" value="Integrin_alpha_N"/>
</dbReference>
<dbReference type="InterPro" id="IPR032695">
    <property type="entry name" value="Integrin_dom_sf"/>
</dbReference>
<dbReference type="PANTHER" id="PTHR23220">
    <property type="entry name" value="INTEGRIN ALPHA"/>
    <property type="match status" value="1"/>
</dbReference>
<dbReference type="PANTHER" id="PTHR23220:SF78">
    <property type="entry name" value="INTEGRIN ALPHA-4"/>
    <property type="match status" value="1"/>
</dbReference>
<dbReference type="Pfam" id="PF01839">
    <property type="entry name" value="FG-GAP"/>
    <property type="match status" value="2"/>
</dbReference>
<dbReference type="Pfam" id="PF08441">
    <property type="entry name" value="Integrin_A_Ig_1"/>
    <property type="match status" value="1"/>
</dbReference>
<dbReference type="Pfam" id="PF20805">
    <property type="entry name" value="Integrin_A_Ig_2"/>
    <property type="match status" value="1"/>
</dbReference>
<dbReference type="Pfam" id="PF20806">
    <property type="entry name" value="Integrin_A_Ig_3"/>
    <property type="match status" value="1"/>
</dbReference>
<dbReference type="PRINTS" id="PR01185">
    <property type="entry name" value="INTEGRINA"/>
</dbReference>
<dbReference type="SMART" id="SM00191">
    <property type="entry name" value="Int_alpha"/>
    <property type="match status" value="6"/>
</dbReference>
<dbReference type="SUPFAM" id="SSF69318">
    <property type="entry name" value="Integrin alpha N-terminal domain"/>
    <property type="match status" value="1"/>
</dbReference>
<dbReference type="SUPFAM" id="SSF69179">
    <property type="entry name" value="Integrin domains"/>
    <property type="match status" value="3"/>
</dbReference>
<dbReference type="PROSITE" id="PS51470">
    <property type="entry name" value="FG_GAP"/>
    <property type="match status" value="7"/>
</dbReference>
<dbReference type="PROSITE" id="PS00242">
    <property type="entry name" value="INTEGRIN_ALPHA"/>
    <property type="match status" value="1"/>
</dbReference>
<evidence type="ECO:0000250" key="1"/>
<evidence type="ECO:0000250" key="2">
    <source>
        <dbReference type="UniProtKB" id="P08648"/>
    </source>
</evidence>
<evidence type="ECO:0000250" key="3">
    <source>
        <dbReference type="UniProtKB" id="P13612"/>
    </source>
</evidence>
<evidence type="ECO:0000255" key="4"/>
<evidence type="ECO:0000255" key="5">
    <source>
        <dbReference type="PROSITE-ProRule" id="PRU00803"/>
    </source>
</evidence>
<evidence type="ECO:0000269" key="6">
    <source>
    </source>
</evidence>
<evidence type="ECO:0000269" key="7">
    <source>
    </source>
</evidence>
<evidence type="ECO:0000305" key="8"/>
<evidence type="ECO:0007744" key="9">
    <source>
    </source>
</evidence>
<evidence type="ECO:0007744" key="10">
    <source>
    </source>
</evidence>